<accession>A9MN53</accession>
<feature type="chain" id="PRO_1000086567" description="Large ribosomal subunit protein uL22">
    <location>
        <begin position="1"/>
        <end position="110"/>
    </location>
</feature>
<dbReference type="EMBL" id="CP000880">
    <property type="protein sequence ID" value="ABX23983.1"/>
    <property type="molecule type" value="Genomic_DNA"/>
</dbReference>
<dbReference type="SMR" id="A9MN53"/>
<dbReference type="STRING" id="41514.SARI_04194"/>
<dbReference type="KEGG" id="ses:SARI_04194"/>
<dbReference type="HOGENOM" id="CLU_083987_3_3_6"/>
<dbReference type="Proteomes" id="UP000002084">
    <property type="component" value="Chromosome"/>
</dbReference>
<dbReference type="GO" id="GO:0022625">
    <property type="term" value="C:cytosolic large ribosomal subunit"/>
    <property type="evidence" value="ECO:0007669"/>
    <property type="project" value="TreeGrafter"/>
</dbReference>
<dbReference type="GO" id="GO:0019843">
    <property type="term" value="F:rRNA binding"/>
    <property type="evidence" value="ECO:0007669"/>
    <property type="project" value="UniProtKB-UniRule"/>
</dbReference>
<dbReference type="GO" id="GO:0003735">
    <property type="term" value="F:structural constituent of ribosome"/>
    <property type="evidence" value="ECO:0007669"/>
    <property type="project" value="InterPro"/>
</dbReference>
<dbReference type="GO" id="GO:0006412">
    <property type="term" value="P:translation"/>
    <property type="evidence" value="ECO:0007669"/>
    <property type="project" value="UniProtKB-UniRule"/>
</dbReference>
<dbReference type="CDD" id="cd00336">
    <property type="entry name" value="Ribosomal_L22"/>
    <property type="match status" value="1"/>
</dbReference>
<dbReference type="FunFam" id="3.90.470.10:FF:000001">
    <property type="entry name" value="50S ribosomal protein L22"/>
    <property type="match status" value="1"/>
</dbReference>
<dbReference type="Gene3D" id="3.90.470.10">
    <property type="entry name" value="Ribosomal protein L22/L17"/>
    <property type="match status" value="1"/>
</dbReference>
<dbReference type="HAMAP" id="MF_01331_B">
    <property type="entry name" value="Ribosomal_uL22_B"/>
    <property type="match status" value="1"/>
</dbReference>
<dbReference type="InterPro" id="IPR001063">
    <property type="entry name" value="Ribosomal_uL22"/>
</dbReference>
<dbReference type="InterPro" id="IPR005727">
    <property type="entry name" value="Ribosomal_uL22_bac/chlpt-type"/>
</dbReference>
<dbReference type="InterPro" id="IPR047867">
    <property type="entry name" value="Ribosomal_uL22_bac/org-type"/>
</dbReference>
<dbReference type="InterPro" id="IPR018260">
    <property type="entry name" value="Ribosomal_uL22_CS"/>
</dbReference>
<dbReference type="InterPro" id="IPR036394">
    <property type="entry name" value="Ribosomal_uL22_sf"/>
</dbReference>
<dbReference type="NCBIfam" id="TIGR01044">
    <property type="entry name" value="rplV_bact"/>
    <property type="match status" value="1"/>
</dbReference>
<dbReference type="PANTHER" id="PTHR13501">
    <property type="entry name" value="CHLOROPLAST 50S RIBOSOMAL PROTEIN L22-RELATED"/>
    <property type="match status" value="1"/>
</dbReference>
<dbReference type="PANTHER" id="PTHR13501:SF8">
    <property type="entry name" value="LARGE RIBOSOMAL SUBUNIT PROTEIN UL22M"/>
    <property type="match status" value="1"/>
</dbReference>
<dbReference type="Pfam" id="PF00237">
    <property type="entry name" value="Ribosomal_L22"/>
    <property type="match status" value="1"/>
</dbReference>
<dbReference type="SUPFAM" id="SSF54843">
    <property type="entry name" value="Ribosomal protein L22"/>
    <property type="match status" value="1"/>
</dbReference>
<dbReference type="PROSITE" id="PS00464">
    <property type="entry name" value="RIBOSOMAL_L22"/>
    <property type="match status" value="1"/>
</dbReference>
<evidence type="ECO:0000255" key="1">
    <source>
        <dbReference type="HAMAP-Rule" id="MF_01331"/>
    </source>
</evidence>
<evidence type="ECO:0000305" key="2"/>
<proteinExistence type="inferred from homology"/>
<keyword id="KW-1185">Reference proteome</keyword>
<keyword id="KW-0687">Ribonucleoprotein</keyword>
<keyword id="KW-0689">Ribosomal protein</keyword>
<keyword id="KW-0694">RNA-binding</keyword>
<keyword id="KW-0699">rRNA-binding</keyword>
<protein>
    <recommendedName>
        <fullName evidence="1">Large ribosomal subunit protein uL22</fullName>
    </recommendedName>
    <alternativeName>
        <fullName evidence="2">50S ribosomal protein L22</fullName>
    </alternativeName>
</protein>
<organism>
    <name type="scientific">Salmonella arizonae (strain ATCC BAA-731 / CDC346-86 / RSK2980)</name>
    <dbReference type="NCBI Taxonomy" id="41514"/>
    <lineage>
        <taxon>Bacteria</taxon>
        <taxon>Pseudomonadati</taxon>
        <taxon>Pseudomonadota</taxon>
        <taxon>Gammaproteobacteria</taxon>
        <taxon>Enterobacterales</taxon>
        <taxon>Enterobacteriaceae</taxon>
        <taxon>Salmonella</taxon>
    </lineage>
</organism>
<name>RL22_SALAR</name>
<comment type="function">
    <text evidence="1">This protein binds specifically to 23S rRNA; its binding is stimulated by other ribosomal proteins, e.g. L4, L17, and L20. It is important during the early stages of 50S assembly. It makes multiple contacts with different domains of the 23S rRNA in the assembled 50S subunit and ribosome (By similarity).</text>
</comment>
<comment type="function">
    <text evidence="1">The globular domain of the protein is located near the polypeptide exit tunnel on the outside of the subunit, while an extended beta-hairpin is found that lines the wall of the exit tunnel in the center of the 70S ribosome.</text>
</comment>
<comment type="subunit">
    <text evidence="1">Part of the 50S ribosomal subunit.</text>
</comment>
<comment type="similarity">
    <text evidence="1">Belongs to the universal ribosomal protein uL22 family.</text>
</comment>
<reference key="1">
    <citation type="submission" date="2007-11" db="EMBL/GenBank/DDBJ databases">
        <authorList>
            <consortium name="The Salmonella enterica serovar Arizonae Genome Sequencing Project"/>
            <person name="McClelland M."/>
            <person name="Sanderson E.K."/>
            <person name="Porwollik S."/>
            <person name="Spieth J."/>
            <person name="Clifton W.S."/>
            <person name="Fulton R."/>
            <person name="Chunyan W."/>
            <person name="Wollam A."/>
            <person name="Shah N."/>
            <person name="Pepin K."/>
            <person name="Bhonagiri V."/>
            <person name="Nash W."/>
            <person name="Johnson M."/>
            <person name="Thiruvilangam P."/>
            <person name="Wilson R."/>
        </authorList>
    </citation>
    <scope>NUCLEOTIDE SEQUENCE [LARGE SCALE GENOMIC DNA]</scope>
    <source>
        <strain>ATCC BAA-731 / CDC346-86 / RSK2980</strain>
    </source>
</reference>
<sequence>METLAQHRHARSSAQKVRLVADLIRGKKVSQALDILTYTNKKAAVLVKKVLESAIANAEHNDGADIDDLKVTKIFVDEGPSMKRIMPRAKGRADRILKRTSHITVVVSDR</sequence>
<gene>
    <name evidence="1" type="primary">rplV</name>
    <name type="ordered locus">SARI_04194</name>
</gene>